<reference key="1">
    <citation type="journal article" date="2000" name="Proc. Natl. Acad. Sci. U.S.A.">
        <title>Genome sequence of Halobacterium species NRC-1.</title>
        <authorList>
            <person name="Ng W.V."/>
            <person name="Kennedy S.P."/>
            <person name="Mahairas G.G."/>
            <person name="Berquist B."/>
            <person name="Pan M."/>
            <person name="Shukla H.D."/>
            <person name="Lasky S.R."/>
            <person name="Baliga N.S."/>
            <person name="Thorsson V."/>
            <person name="Sbrogna J."/>
            <person name="Swartzell S."/>
            <person name="Weir D."/>
            <person name="Hall J."/>
            <person name="Dahl T.A."/>
            <person name="Welti R."/>
            <person name="Goo Y.A."/>
            <person name="Leithauser B."/>
            <person name="Keller K."/>
            <person name="Cruz R."/>
            <person name="Danson M.J."/>
            <person name="Hough D.W."/>
            <person name="Maddocks D.G."/>
            <person name="Jablonski P.E."/>
            <person name="Krebs M.P."/>
            <person name="Angevine C.M."/>
            <person name="Dale H."/>
            <person name="Isenbarger T.A."/>
            <person name="Peck R.F."/>
            <person name="Pohlschroder M."/>
            <person name="Spudich J.L."/>
            <person name="Jung K.-H."/>
            <person name="Alam M."/>
            <person name="Freitas T."/>
            <person name="Hou S."/>
            <person name="Daniels C.J."/>
            <person name="Dennis P.P."/>
            <person name="Omer A.D."/>
            <person name="Ebhardt H."/>
            <person name="Lowe T.M."/>
            <person name="Liang P."/>
            <person name="Riley M."/>
            <person name="Hood L."/>
            <person name="DasSarma S."/>
        </authorList>
    </citation>
    <scope>NUCLEOTIDE SEQUENCE [LARGE SCALE GENOMIC DNA]</scope>
    <source>
        <strain>ATCC 700922 / JCM 11081 / NRC-1</strain>
    </source>
</reference>
<feature type="chain" id="PRO_0000092743" description="Phosphonates import ATP-binding protein PhnC">
    <location>
        <begin position="1"/>
        <end position="280"/>
    </location>
</feature>
<feature type="domain" description="ABC transporter" evidence="1">
    <location>
        <begin position="4"/>
        <end position="239"/>
    </location>
</feature>
<feature type="region of interest" description="Disordered" evidence="2">
    <location>
        <begin position="246"/>
        <end position="280"/>
    </location>
</feature>
<feature type="binding site" evidence="1">
    <location>
        <begin position="36"/>
        <end position="43"/>
    </location>
    <ligand>
        <name>ATP</name>
        <dbReference type="ChEBI" id="CHEBI:30616"/>
    </ligand>
</feature>
<evidence type="ECO:0000255" key="1">
    <source>
        <dbReference type="HAMAP-Rule" id="MF_01713"/>
    </source>
</evidence>
<evidence type="ECO:0000256" key="2">
    <source>
        <dbReference type="SAM" id="MobiDB-lite"/>
    </source>
</evidence>
<keyword id="KW-0067">ATP-binding</keyword>
<keyword id="KW-1003">Cell membrane</keyword>
<keyword id="KW-0472">Membrane</keyword>
<keyword id="KW-0547">Nucleotide-binding</keyword>
<keyword id="KW-0918">Phosphonate transport</keyword>
<keyword id="KW-1185">Reference proteome</keyword>
<keyword id="KW-1278">Translocase</keyword>
<keyword id="KW-0813">Transport</keyword>
<sequence>MSNITVTNLHKSYGDVDALEDVSFEILDGEFVVILGESGAGKSTLLRCLNGLTEPTTGSVKIDGEPVNGPRDDVGMIFQQHNIIEEMTAYTNALSGSLNRTSLVRSLFQWNDREEKLDALRALDTVGLLDDAEQRAGRMSGGQQQRVGISRALVQDPNLLLADEPVASLDPASAESVMGYIKDAADQHDLTTLASLHQVNLAREFGQRFIGMKDGRVIFDGYRDDLTFDVIDDIYGNIQTDAIRTGDDANADVAPTTSSDGGTDAAGGPDQQPASDPHLS</sequence>
<organism>
    <name type="scientific">Halobacterium salinarum (strain ATCC 700922 / JCM 11081 / NRC-1)</name>
    <name type="common">Halobacterium halobium</name>
    <dbReference type="NCBI Taxonomy" id="64091"/>
    <lineage>
        <taxon>Archaea</taxon>
        <taxon>Methanobacteriati</taxon>
        <taxon>Methanobacteriota</taxon>
        <taxon>Stenosarchaea group</taxon>
        <taxon>Halobacteria</taxon>
        <taxon>Halobacteriales</taxon>
        <taxon>Halobacteriaceae</taxon>
        <taxon>Halobacterium</taxon>
        <taxon>Halobacterium salinarum NRC-34001</taxon>
    </lineage>
</organism>
<gene>
    <name evidence="1" type="primary">phnC</name>
    <name type="ordered locus">VNG_2085G</name>
</gene>
<protein>
    <recommendedName>
        <fullName evidence="1">Phosphonates import ATP-binding protein PhnC</fullName>
        <ecNumber evidence="1">7.3.2.2</ecNumber>
    </recommendedName>
</protein>
<accession>Q9HNI8</accession>
<comment type="function">
    <text evidence="1">Part of the ABC transporter complex PhnCDE involved in phosphonates import. Responsible for energy coupling to the transport system.</text>
</comment>
<comment type="catalytic activity">
    <reaction evidence="1">
        <text>phosphonate(out) + ATP + H2O = phosphonate(in) + ADP + phosphate + H(+)</text>
        <dbReference type="Rhea" id="RHEA:18065"/>
        <dbReference type="ChEBI" id="CHEBI:15377"/>
        <dbReference type="ChEBI" id="CHEBI:15378"/>
        <dbReference type="ChEBI" id="CHEBI:16215"/>
        <dbReference type="ChEBI" id="CHEBI:30616"/>
        <dbReference type="ChEBI" id="CHEBI:43474"/>
        <dbReference type="ChEBI" id="CHEBI:456216"/>
        <dbReference type="EC" id="7.3.2.2"/>
    </reaction>
</comment>
<comment type="subunit">
    <text evidence="1">The complex is composed of two ATP-binding proteins (PhnC), two transmembrane proteins (PhnE) and a solute-binding protein (PhnD).</text>
</comment>
<comment type="subcellular location">
    <subcellularLocation>
        <location evidence="1">Cell membrane</location>
        <topology evidence="1">Peripheral membrane protein</topology>
    </subcellularLocation>
</comment>
<comment type="similarity">
    <text evidence="1">Belongs to the ABC transporter superfamily. Phosphonates importer (TC 3.A.1.9.1) family.</text>
</comment>
<name>PHNC_HALSA</name>
<dbReference type="EC" id="7.3.2.2" evidence="1"/>
<dbReference type="EMBL" id="AE004437">
    <property type="protein sequence ID" value="AAG20232.1"/>
    <property type="molecule type" value="Genomic_DNA"/>
</dbReference>
<dbReference type="PIR" id="D84358">
    <property type="entry name" value="D84358"/>
</dbReference>
<dbReference type="RefSeq" id="WP_010903534.1">
    <property type="nucleotide sequence ID" value="NC_002607.1"/>
</dbReference>
<dbReference type="SMR" id="Q9HNI8"/>
<dbReference type="STRING" id="64091.VNG_2085G"/>
<dbReference type="PaxDb" id="64091-VNG_2085G"/>
<dbReference type="KEGG" id="hal:VNG_2085G"/>
<dbReference type="PATRIC" id="fig|64091.14.peg.1591"/>
<dbReference type="HOGENOM" id="CLU_000604_1_22_2"/>
<dbReference type="InParanoid" id="Q9HNI8"/>
<dbReference type="OrthoDB" id="302885at2157"/>
<dbReference type="PhylomeDB" id="Q9HNI8"/>
<dbReference type="Proteomes" id="UP000000554">
    <property type="component" value="Chromosome"/>
</dbReference>
<dbReference type="GO" id="GO:0005886">
    <property type="term" value="C:plasma membrane"/>
    <property type="evidence" value="ECO:0007669"/>
    <property type="project" value="UniProtKB-SubCell"/>
</dbReference>
<dbReference type="GO" id="GO:0015416">
    <property type="term" value="F:ABC-type phosphonate transporter activity"/>
    <property type="evidence" value="ECO:0007669"/>
    <property type="project" value="UniProtKB-EC"/>
</dbReference>
<dbReference type="GO" id="GO:0005524">
    <property type="term" value="F:ATP binding"/>
    <property type="evidence" value="ECO:0007669"/>
    <property type="project" value="UniProtKB-KW"/>
</dbReference>
<dbReference type="GO" id="GO:0016887">
    <property type="term" value="F:ATP hydrolysis activity"/>
    <property type="evidence" value="ECO:0007669"/>
    <property type="project" value="InterPro"/>
</dbReference>
<dbReference type="CDD" id="cd03256">
    <property type="entry name" value="ABC_PhnC_transporter"/>
    <property type="match status" value="1"/>
</dbReference>
<dbReference type="Gene3D" id="3.40.50.300">
    <property type="entry name" value="P-loop containing nucleotide triphosphate hydrolases"/>
    <property type="match status" value="1"/>
</dbReference>
<dbReference type="InterPro" id="IPR003593">
    <property type="entry name" value="AAA+_ATPase"/>
</dbReference>
<dbReference type="InterPro" id="IPR003439">
    <property type="entry name" value="ABC_transporter-like_ATP-bd"/>
</dbReference>
<dbReference type="InterPro" id="IPR017871">
    <property type="entry name" value="ABC_transporter-like_CS"/>
</dbReference>
<dbReference type="InterPro" id="IPR012693">
    <property type="entry name" value="ABC_transpr_PhnC"/>
</dbReference>
<dbReference type="InterPro" id="IPR050086">
    <property type="entry name" value="MetN_ABC_transporter-like"/>
</dbReference>
<dbReference type="InterPro" id="IPR027417">
    <property type="entry name" value="P-loop_NTPase"/>
</dbReference>
<dbReference type="InterPro" id="IPR025662">
    <property type="entry name" value="Sigma_54_int_dom_ATP-bd_1"/>
</dbReference>
<dbReference type="PANTHER" id="PTHR43166">
    <property type="entry name" value="AMINO ACID IMPORT ATP-BINDING PROTEIN"/>
    <property type="match status" value="1"/>
</dbReference>
<dbReference type="PANTHER" id="PTHR43166:SF6">
    <property type="entry name" value="PHOSPHONATES IMPORT ATP-BINDING PROTEIN PHNC"/>
    <property type="match status" value="1"/>
</dbReference>
<dbReference type="Pfam" id="PF00005">
    <property type="entry name" value="ABC_tran"/>
    <property type="match status" value="1"/>
</dbReference>
<dbReference type="SMART" id="SM00382">
    <property type="entry name" value="AAA"/>
    <property type="match status" value="1"/>
</dbReference>
<dbReference type="SUPFAM" id="SSF52540">
    <property type="entry name" value="P-loop containing nucleoside triphosphate hydrolases"/>
    <property type="match status" value="1"/>
</dbReference>
<dbReference type="PROSITE" id="PS00211">
    <property type="entry name" value="ABC_TRANSPORTER_1"/>
    <property type="match status" value="1"/>
</dbReference>
<dbReference type="PROSITE" id="PS50893">
    <property type="entry name" value="ABC_TRANSPORTER_2"/>
    <property type="match status" value="1"/>
</dbReference>
<dbReference type="PROSITE" id="PS51249">
    <property type="entry name" value="PHNC"/>
    <property type="match status" value="1"/>
</dbReference>
<proteinExistence type="inferred from homology"/>